<reference key="1">
    <citation type="journal article" date="2005" name="Science">
        <title>The genome of the basidiomycetous yeast and human pathogen Cryptococcus neoformans.</title>
        <authorList>
            <person name="Loftus B.J."/>
            <person name="Fung E."/>
            <person name="Roncaglia P."/>
            <person name="Rowley D."/>
            <person name="Amedeo P."/>
            <person name="Bruno D."/>
            <person name="Vamathevan J."/>
            <person name="Miranda M."/>
            <person name="Anderson I.J."/>
            <person name="Fraser J.A."/>
            <person name="Allen J.E."/>
            <person name="Bosdet I.E."/>
            <person name="Brent M.R."/>
            <person name="Chiu R."/>
            <person name="Doering T.L."/>
            <person name="Donlin M.J."/>
            <person name="D'Souza C.A."/>
            <person name="Fox D.S."/>
            <person name="Grinberg V."/>
            <person name="Fu J."/>
            <person name="Fukushima M."/>
            <person name="Haas B.J."/>
            <person name="Huang J.C."/>
            <person name="Janbon G."/>
            <person name="Jones S.J.M."/>
            <person name="Koo H.L."/>
            <person name="Krzywinski M.I."/>
            <person name="Kwon-Chung K.J."/>
            <person name="Lengeler K.B."/>
            <person name="Maiti R."/>
            <person name="Marra M.A."/>
            <person name="Marra R.E."/>
            <person name="Mathewson C.A."/>
            <person name="Mitchell T.G."/>
            <person name="Pertea M."/>
            <person name="Riggs F.R."/>
            <person name="Salzberg S.L."/>
            <person name="Schein J.E."/>
            <person name="Shvartsbeyn A."/>
            <person name="Shin H."/>
            <person name="Shumway M."/>
            <person name="Specht C.A."/>
            <person name="Suh B.B."/>
            <person name="Tenney A."/>
            <person name="Utterback T.R."/>
            <person name="Wickes B.L."/>
            <person name="Wortman J.R."/>
            <person name="Wye N.H."/>
            <person name="Kronstad J.W."/>
            <person name="Lodge J.K."/>
            <person name="Heitman J."/>
            <person name="Davis R.W."/>
            <person name="Fraser C.M."/>
            <person name="Hyman R.W."/>
        </authorList>
    </citation>
    <scope>NUCLEOTIDE SEQUENCE [LARGE SCALE GENOMIC DNA]</scope>
    <source>
        <strain>B-3501A</strain>
    </source>
</reference>
<protein>
    <recommendedName>
        <fullName>Pre-rRNA-processing protein ESF2</fullName>
    </recommendedName>
    <alternativeName>
        <fullName>18S rRNA factor 2</fullName>
    </alternativeName>
</protein>
<evidence type="ECO:0000250" key="1"/>
<evidence type="ECO:0000256" key="2">
    <source>
        <dbReference type="SAM" id="MobiDB-lite"/>
    </source>
</evidence>
<evidence type="ECO:0000305" key="3"/>
<name>ESF2_CRYNB</name>
<gene>
    <name type="primary">ESF2</name>
    <name type="ordered locus">CNBB5250</name>
</gene>
<sequence>MTTPSKSSNKRFRDNESEVDETGSQIEKQVNATASTSTSRPALSSHESEGSSVMKTKKKKKAQTPGIVFISRVPPGMTPQKIRHLMGRWGDIGKVYAQRRDAPGGYNPNSANQKKQKHASANFTEAWVEFLDKSVAKTVASMLNAQVIGGKKGDRWRDDIWTMRYLSGFKWEMLGEQIAYERQAHQARLRTEITRAKTEQNEYLKNVELARTLEKRKAKKAAAGGPSESAPNQDAHSRSYKQRNVVEKPKTLEGQGMDGVLNNIFG</sequence>
<dbReference type="EMBL" id="AAEY01000011">
    <property type="protein sequence ID" value="EAL22351.1"/>
    <property type="molecule type" value="Genomic_DNA"/>
</dbReference>
<dbReference type="RefSeq" id="XP_776998.1">
    <property type="nucleotide sequence ID" value="XM_771905.1"/>
</dbReference>
<dbReference type="SMR" id="P0CL97"/>
<dbReference type="EnsemblFungi" id="AAW41747">
    <property type="protein sequence ID" value="AAW41747"/>
    <property type="gene ID" value="CNB00450"/>
</dbReference>
<dbReference type="GeneID" id="4934620"/>
<dbReference type="KEGG" id="cnb:CNBB5250"/>
<dbReference type="VEuPathDB" id="FungiDB:CNBB5250"/>
<dbReference type="HOGENOM" id="CLU_054086_2_0_1"/>
<dbReference type="OrthoDB" id="5266at5206"/>
<dbReference type="GO" id="GO:0005730">
    <property type="term" value="C:nucleolus"/>
    <property type="evidence" value="ECO:0007669"/>
    <property type="project" value="UniProtKB-SubCell"/>
</dbReference>
<dbReference type="GO" id="GO:0003723">
    <property type="term" value="F:RNA binding"/>
    <property type="evidence" value="ECO:0007669"/>
    <property type="project" value="UniProtKB-KW"/>
</dbReference>
<dbReference type="GO" id="GO:0000480">
    <property type="term" value="P:endonucleolytic cleavage in 5'-ETS of tricistronic rRNA transcript (SSU-rRNA, 5.8S rRNA, LSU-rRNA)"/>
    <property type="evidence" value="ECO:0007669"/>
    <property type="project" value="TreeGrafter"/>
</dbReference>
<dbReference type="GO" id="GO:0000447">
    <property type="term" value="P:endonucleolytic cleavage in ITS1 to separate SSU-rRNA from 5.8S rRNA and LSU-rRNA from tricistronic rRNA transcript (SSU-rRNA, 5.8S rRNA, LSU-rRNA)"/>
    <property type="evidence" value="ECO:0007669"/>
    <property type="project" value="TreeGrafter"/>
</dbReference>
<dbReference type="GO" id="GO:0000472">
    <property type="term" value="P:endonucleolytic cleavage to generate mature 5'-end of SSU-rRNA from (SSU-rRNA, 5.8S rRNA, LSU-rRNA)"/>
    <property type="evidence" value="ECO:0007669"/>
    <property type="project" value="TreeGrafter"/>
</dbReference>
<dbReference type="GO" id="GO:0034462">
    <property type="term" value="P:small-subunit processome assembly"/>
    <property type="evidence" value="ECO:0007669"/>
    <property type="project" value="TreeGrafter"/>
</dbReference>
<dbReference type="CDD" id="cd12263">
    <property type="entry name" value="RRM_ABT1_like"/>
    <property type="match status" value="1"/>
</dbReference>
<dbReference type="Gene3D" id="3.30.70.330">
    <property type="match status" value="1"/>
</dbReference>
<dbReference type="InterPro" id="IPR039119">
    <property type="entry name" value="ABT1/Esf2"/>
</dbReference>
<dbReference type="InterPro" id="IPR034353">
    <property type="entry name" value="ABT1/ESF2_RRM"/>
</dbReference>
<dbReference type="InterPro" id="IPR012677">
    <property type="entry name" value="Nucleotide-bd_a/b_plait_sf"/>
</dbReference>
<dbReference type="InterPro" id="IPR035979">
    <property type="entry name" value="RBD_domain_sf"/>
</dbReference>
<dbReference type="PANTHER" id="PTHR12311">
    <property type="entry name" value="ACTIVATOR OF BASAL TRANSCRIPTION 1"/>
    <property type="match status" value="1"/>
</dbReference>
<dbReference type="PANTHER" id="PTHR12311:SF7">
    <property type="entry name" value="ACTIVATOR OF BASAL TRANSCRIPTION 1"/>
    <property type="match status" value="1"/>
</dbReference>
<dbReference type="SUPFAM" id="SSF54928">
    <property type="entry name" value="RNA-binding domain, RBD"/>
    <property type="match status" value="1"/>
</dbReference>
<accession>P0CL97</accession>
<accession>Q55X36</accession>
<accession>Q5KMU6</accession>
<comment type="function">
    <text evidence="1">Involved in the small subunit (SSU) processome assembly and function, and in the 18S rRNA synthesis. Required for the early cleavages at sites A0, A1 and A2 (By similarity).</text>
</comment>
<comment type="subcellular location">
    <subcellularLocation>
        <location evidence="1">Nucleus</location>
        <location evidence="1">Nucleolus</location>
    </subcellularLocation>
</comment>
<comment type="similarity">
    <text evidence="3">Belongs to the ESF2/ABP1 family.</text>
</comment>
<organism>
    <name type="scientific">Cryptococcus neoformans var. neoformans serotype D (strain B-3501A)</name>
    <name type="common">Filobasidiella neoformans</name>
    <dbReference type="NCBI Taxonomy" id="283643"/>
    <lineage>
        <taxon>Eukaryota</taxon>
        <taxon>Fungi</taxon>
        <taxon>Dikarya</taxon>
        <taxon>Basidiomycota</taxon>
        <taxon>Agaricomycotina</taxon>
        <taxon>Tremellomycetes</taxon>
        <taxon>Tremellales</taxon>
        <taxon>Cryptococcaceae</taxon>
        <taxon>Cryptococcus</taxon>
        <taxon>Cryptococcus neoformans species complex</taxon>
    </lineage>
</organism>
<proteinExistence type="inferred from homology"/>
<keyword id="KW-0539">Nucleus</keyword>
<keyword id="KW-0690">Ribosome biogenesis</keyword>
<keyword id="KW-0694">RNA-binding</keyword>
<keyword id="KW-0698">rRNA processing</keyword>
<feature type="chain" id="PRO_0000409999" description="Pre-rRNA-processing protein ESF2">
    <location>
        <begin position="1"/>
        <end position="266"/>
    </location>
</feature>
<feature type="domain" description="RRM">
    <location>
        <begin position="66"/>
        <end position="160"/>
    </location>
</feature>
<feature type="region of interest" description="Disordered" evidence="2">
    <location>
        <begin position="1"/>
        <end position="74"/>
    </location>
</feature>
<feature type="region of interest" description="Disordered" evidence="2">
    <location>
        <begin position="215"/>
        <end position="259"/>
    </location>
</feature>
<feature type="compositionally biased region" description="Polar residues" evidence="2">
    <location>
        <begin position="22"/>
        <end position="42"/>
    </location>
</feature>
<feature type="compositionally biased region" description="Low complexity" evidence="2">
    <location>
        <begin position="221"/>
        <end position="231"/>
    </location>
</feature>